<comment type="function">
    <text evidence="1">Catalyzes the decarboxylation of orotidine 5'-monophosphate (OMP) to uridine 5'-monophosphate (UMP).</text>
</comment>
<comment type="catalytic activity">
    <reaction evidence="1">
        <text>orotidine 5'-phosphate + H(+) = UMP + CO2</text>
        <dbReference type="Rhea" id="RHEA:11596"/>
        <dbReference type="ChEBI" id="CHEBI:15378"/>
        <dbReference type="ChEBI" id="CHEBI:16526"/>
        <dbReference type="ChEBI" id="CHEBI:57538"/>
        <dbReference type="ChEBI" id="CHEBI:57865"/>
        <dbReference type="EC" id="4.1.1.23"/>
    </reaction>
</comment>
<comment type="pathway">
    <text evidence="1">Pyrimidine metabolism; UMP biosynthesis via de novo pathway; UMP from orotate: step 2/2.</text>
</comment>
<comment type="subunit">
    <text evidence="1">Homodimer.</text>
</comment>
<comment type="similarity">
    <text evidence="1">Belongs to the OMP decarboxylase family. Type 1 subfamily.</text>
</comment>
<organism>
    <name type="scientific">Syntrophotalea carbinolica (strain DSM 2380 / NBRC 103641 / GraBd1)</name>
    <name type="common">Pelobacter carbinolicus</name>
    <dbReference type="NCBI Taxonomy" id="338963"/>
    <lineage>
        <taxon>Bacteria</taxon>
        <taxon>Pseudomonadati</taxon>
        <taxon>Thermodesulfobacteriota</taxon>
        <taxon>Desulfuromonadia</taxon>
        <taxon>Desulfuromonadales</taxon>
        <taxon>Syntrophotaleaceae</taxon>
        <taxon>Syntrophotalea</taxon>
    </lineage>
</organism>
<protein>
    <recommendedName>
        <fullName evidence="1">Orotidine 5'-phosphate decarboxylase</fullName>
        <ecNumber evidence="1">4.1.1.23</ecNumber>
    </recommendedName>
    <alternativeName>
        <fullName evidence="1">OMP decarboxylase</fullName>
        <shortName evidence="1">OMPDCase</shortName>
        <shortName evidence="1">OMPdecase</shortName>
    </alternativeName>
</protein>
<gene>
    <name evidence="1" type="primary">pyrF</name>
    <name type="ordered locus">Pcar_0684</name>
</gene>
<feature type="chain" id="PRO_0000241883" description="Orotidine 5'-phosphate decarboxylase">
    <location>
        <begin position="1"/>
        <end position="244"/>
    </location>
</feature>
<feature type="active site" description="Proton donor" evidence="1">
    <location>
        <position position="65"/>
    </location>
</feature>
<feature type="binding site" evidence="1">
    <location>
        <position position="14"/>
    </location>
    <ligand>
        <name>substrate</name>
    </ligand>
</feature>
<feature type="binding site" evidence="1">
    <location>
        <position position="36"/>
    </location>
    <ligand>
        <name>substrate</name>
    </ligand>
</feature>
<feature type="binding site" evidence="1">
    <location>
        <begin position="63"/>
        <end position="72"/>
    </location>
    <ligand>
        <name>substrate</name>
    </ligand>
</feature>
<feature type="binding site" evidence="1">
    <location>
        <position position="127"/>
    </location>
    <ligand>
        <name>substrate</name>
    </ligand>
</feature>
<feature type="binding site" evidence="1">
    <location>
        <position position="188"/>
    </location>
    <ligand>
        <name>substrate</name>
    </ligand>
</feature>
<feature type="binding site" evidence="1">
    <location>
        <position position="197"/>
    </location>
    <ligand>
        <name>substrate</name>
    </ligand>
</feature>
<feature type="binding site" evidence="1">
    <location>
        <position position="217"/>
    </location>
    <ligand>
        <name>substrate</name>
    </ligand>
</feature>
<feature type="binding site" evidence="1">
    <location>
        <position position="218"/>
    </location>
    <ligand>
        <name>substrate</name>
    </ligand>
</feature>
<sequence length="244" mass="26064">MLVEARKKLIFALDVESGASAEEWVRRLRGKVGVFKVGKQLFTRCGPDVVRMIRDHGGEVFLDLKFHDIPNTVAKAAIEACRLGVRMFNVHALGGRAMMAGAAEAVREYFAAGEDVPPLLLGVTILTSSSEETLREVGVDRPVEEMVPRLACLAKGAGLDGVVASPREVGLIRRACGRDFAIVTPGVRPSFAETNDQQRIMTPGEAIAAGSDFLVVGRPIAASEDPVGAAQRIVEEMAAALEEG</sequence>
<name>PYRF_SYNC1</name>
<evidence type="ECO:0000255" key="1">
    <source>
        <dbReference type="HAMAP-Rule" id="MF_01200"/>
    </source>
</evidence>
<keyword id="KW-0210">Decarboxylase</keyword>
<keyword id="KW-0456">Lyase</keyword>
<keyword id="KW-0665">Pyrimidine biosynthesis</keyword>
<keyword id="KW-1185">Reference proteome</keyword>
<reference key="1">
    <citation type="submission" date="2005-10" db="EMBL/GenBank/DDBJ databases">
        <title>Complete sequence of Pelobacter carbinolicus DSM 2380.</title>
        <authorList>
            <person name="Copeland A."/>
            <person name="Lucas S."/>
            <person name="Lapidus A."/>
            <person name="Barry K."/>
            <person name="Detter J.C."/>
            <person name="Glavina T."/>
            <person name="Hammon N."/>
            <person name="Israni S."/>
            <person name="Pitluck S."/>
            <person name="Chertkov O."/>
            <person name="Schmutz J."/>
            <person name="Larimer F."/>
            <person name="Land M."/>
            <person name="Kyrpides N."/>
            <person name="Ivanova N."/>
            <person name="Richardson P."/>
        </authorList>
    </citation>
    <scope>NUCLEOTIDE SEQUENCE [LARGE SCALE GENOMIC DNA]</scope>
    <source>
        <strain>DSM 2380 / NBRC 103641 / GraBd1</strain>
    </source>
</reference>
<dbReference type="EC" id="4.1.1.23" evidence="1"/>
<dbReference type="EMBL" id="CP000142">
    <property type="protein sequence ID" value="ABA87943.1"/>
    <property type="molecule type" value="Genomic_DNA"/>
</dbReference>
<dbReference type="RefSeq" id="WP_011340386.1">
    <property type="nucleotide sequence ID" value="NC_007498.2"/>
</dbReference>
<dbReference type="SMR" id="Q3A6R4"/>
<dbReference type="STRING" id="338963.Pcar_0684"/>
<dbReference type="KEGG" id="pca:Pcar_0684"/>
<dbReference type="eggNOG" id="COG0284">
    <property type="taxonomic scope" value="Bacteria"/>
</dbReference>
<dbReference type="HOGENOM" id="CLU_067069_0_0_7"/>
<dbReference type="OrthoDB" id="9806203at2"/>
<dbReference type="UniPathway" id="UPA00070">
    <property type="reaction ID" value="UER00120"/>
</dbReference>
<dbReference type="Proteomes" id="UP000002534">
    <property type="component" value="Chromosome"/>
</dbReference>
<dbReference type="GO" id="GO:0005829">
    <property type="term" value="C:cytosol"/>
    <property type="evidence" value="ECO:0007669"/>
    <property type="project" value="TreeGrafter"/>
</dbReference>
<dbReference type="GO" id="GO:0004590">
    <property type="term" value="F:orotidine-5'-phosphate decarboxylase activity"/>
    <property type="evidence" value="ECO:0007669"/>
    <property type="project" value="UniProtKB-UniRule"/>
</dbReference>
<dbReference type="GO" id="GO:0006207">
    <property type="term" value="P:'de novo' pyrimidine nucleobase biosynthetic process"/>
    <property type="evidence" value="ECO:0007669"/>
    <property type="project" value="InterPro"/>
</dbReference>
<dbReference type="GO" id="GO:0044205">
    <property type="term" value="P:'de novo' UMP biosynthetic process"/>
    <property type="evidence" value="ECO:0007669"/>
    <property type="project" value="UniProtKB-UniRule"/>
</dbReference>
<dbReference type="CDD" id="cd04725">
    <property type="entry name" value="OMP_decarboxylase_like"/>
    <property type="match status" value="1"/>
</dbReference>
<dbReference type="FunFam" id="3.20.20.70:FF:000015">
    <property type="entry name" value="Orotidine 5'-phosphate decarboxylase"/>
    <property type="match status" value="1"/>
</dbReference>
<dbReference type="Gene3D" id="3.20.20.70">
    <property type="entry name" value="Aldolase class I"/>
    <property type="match status" value="1"/>
</dbReference>
<dbReference type="HAMAP" id="MF_01200_B">
    <property type="entry name" value="OMPdecase_type1_B"/>
    <property type="match status" value="1"/>
</dbReference>
<dbReference type="InterPro" id="IPR013785">
    <property type="entry name" value="Aldolase_TIM"/>
</dbReference>
<dbReference type="InterPro" id="IPR014732">
    <property type="entry name" value="OMPdecase"/>
</dbReference>
<dbReference type="InterPro" id="IPR018089">
    <property type="entry name" value="OMPdecase_AS"/>
</dbReference>
<dbReference type="InterPro" id="IPR047596">
    <property type="entry name" value="OMPdecase_bac"/>
</dbReference>
<dbReference type="InterPro" id="IPR001754">
    <property type="entry name" value="OMPdeCOase_dom"/>
</dbReference>
<dbReference type="InterPro" id="IPR011060">
    <property type="entry name" value="RibuloseP-bd_barrel"/>
</dbReference>
<dbReference type="NCBIfam" id="NF001273">
    <property type="entry name" value="PRK00230.1"/>
    <property type="match status" value="1"/>
</dbReference>
<dbReference type="NCBIfam" id="TIGR01740">
    <property type="entry name" value="pyrF"/>
    <property type="match status" value="1"/>
</dbReference>
<dbReference type="PANTHER" id="PTHR32119">
    <property type="entry name" value="OROTIDINE 5'-PHOSPHATE DECARBOXYLASE"/>
    <property type="match status" value="1"/>
</dbReference>
<dbReference type="PANTHER" id="PTHR32119:SF2">
    <property type="entry name" value="OROTIDINE 5'-PHOSPHATE DECARBOXYLASE"/>
    <property type="match status" value="1"/>
</dbReference>
<dbReference type="Pfam" id="PF00215">
    <property type="entry name" value="OMPdecase"/>
    <property type="match status" value="1"/>
</dbReference>
<dbReference type="SMART" id="SM00934">
    <property type="entry name" value="OMPdecase"/>
    <property type="match status" value="1"/>
</dbReference>
<dbReference type="SUPFAM" id="SSF51366">
    <property type="entry name" value="Ribulose-phoshate binding barrel"/>
    <property type="match status" value="1"/>
</dbReference>
<dbReference type="PROSITE" id="PS00156">
    <property type="entry name" value="OMPDECASE"/>
    <property type="match status" value="1"/>
</dbReference>
<proteinExistence type="inferred from homology"/>
<accession>Q3A6R4</accession>